<comment type="function">
    <text evidence="2">Component of the large ribosomal subunit. The ribosome is a large ribonucleoprotein complex responsible for the synthesis of proteins in the cell.</text>
</comment>
<comment type="subunit">
    <text evidence="2">Component of the large ribosomal subunit.</text>
</comment>
<comment type="subcellular location">
    <subcellularLocation>
        <location evidence="2">Cytoplasm</location>
    </subcellularLocation>
</comment>
<comment type="similarity">
    <text evidence="3">Belongs to the eukaryotic ribosomal protein eL15 family.</text>
</comment>
<organism>
    <name type="scientific">Megalobrama amblycephala</name>
    <name type="common">Chinese blunt snout bream</name>
    <name type="synonym">Brema carp</name>
    <dbReference type="NCBI Taxonomy" id="75352"/>
    <lineage>
        <taxon>Eukaryota</taxon>
        <taxon>Metazoa</taxon>
        <taxon>Chordata</taxon>
        <taxon>Craniata</taxon>
        <taxon>Vertebrata</taxon>
        <taxon>Euteleostomi</taxon>
        <taxon>Actinopterygii</taxon>
        <taxon>Neopterygii</taxon>
        <taxon>Teleostei</taxon>
        <taxon>Ostariophysi</taxon>
        <taxon>Cypriniformes</taxon>
        <taxon>Xenocyprididae</taxon>
        <taxon>Xenocypridinae</taxon>
        <taxon>Megalobrama</taxon>
    </lineage>
</organism>
<dbReference type="EMBL" id="AY249418">
    <property type="protein sequence ID" value="AAP35255.1"/>
    <property type="molecule type" value="mRNA"/>
</dbReference>
<dbReference type="SMR" id="Q7T3N4"/>
<dbReference type="GO" id="GO:0022625">
    <property type="term" value="C:cytosolic large ribosomal subunit"/>
    <property type="evidence" value="ECO:0007669"/>
    <property type="project" value="TreeGrafter"/>
</dbReference>
<dbReference type="GO" id="GO:0003723">
    <property type="term" value="F:RNA binding"/>
    <property type="evidence" value="ECO:0007669"/>
    <property type="project" value="TreeGrafter"/>
</dbReference>
<dbReference type="GO" id="GO:0003735">
    <property type="term" value="F:structural constituent of ribosome"/>
    <property type="evidence" value="ECO:0007669"/>
    <property type="project" value="InterPro"/>
</dbReference>
<dbReference type="GO" id="GO:0002181">
    <property type="term" value="P:cytoplasmic translation"/>
    <property type="evidence" value="ECO:0007669"/>
    <property type="project" value="TreeGrafter"/>
</dbReference>
<dbReference type="FunFam" id="3.40.1120.10:FF:000001">
    <property type="entry name" value="Ribosomal protein L15"/>
    <property type="match status" value="1"/>
</dbReference>
<dbReference type="Gene3D" id="3.40.1120.10">
    <property type="entry name" value="Ribosomal protein l15e"/>
    <property type="match status" value="1"/>
</dbReference>
<dbReference type="InterPro" id="IPR024794">
    <property type="entry name" value="Rbsml_eL15_core_dom_sf"/>
</dbReference>
<dbReference type="InterPro" id="IPR000439">
    <property type="entry name" value="Ribosomal_eL15"/>
</dbReference>
<dbReference type="InterPro" id="IPR020925">
    <property type="entry name" value="Ribosomal_eL15_CS"/>
</dbReference>
<dbReference type="InterPro" id="IPR012678">
    <property type="entry name" value="Ribosomal_uL23/eL15/eS24_sf"/>
</dbReference>
<dbReference type="NCBIfam" id="NF003269">
    <property type="entry name" value="PRK04243.1"/>
    <property type="match status" value="1"/>
</dbReference>
<dbReference type="PANTHER" id="PTHR11847:SF4">
    <property type="entry name" value="LARGE RIBOSOMAL SUBUNIT PROTEIN EL15"/>
    <property type="match status" value="1"/>
</dbReference>
<dbReference type="PANTHER" id="PTHR11847">
    <property type="entry name" value="RIBOSOMAL PROTEIN L15"/>
    <property type="match status" value="1"/>
</dbReference>
<dbReference type="Pfam" id="PF00827">
    <property type="entry name" value="Ribosomal_L15e"/>
    <property type="match status" value="1"/>
</dbReference>
<dbReference type="SMART" id="SM01384">
    <property type="entry name" value="Ribosomal_L15e"/>
    <property type="match status" value="1"/>
</dbReference>
<dbReference type="SUPFAM" id="SSF54189">
    <property type="entry name" value="Ribosomal proteins S24e, L23 and L15e"/>
    <property type="match status" value="1"/>
</dbReference>
<dbReference type="PROSITE" id="PS01194">
    <property type="entry name" value="RIBOSOMAL_L15E"/>
    <property type="match status" value="1"/>
</dbReference>
<evidence type="ECO:0000250" key="1"/>
<evidence type="ECO:0000250" key="2">
    <source>
        <dbReference type="UniProtKB" id="P61313"/>
    </source>
</evidence>
<evidence type="ECO:0000305" key="3"/>
<feature type="initiator methionine" description="Removed" evidence="1">
    <location>
        <position position="1"/>
    </location>
</feature>
<feature type="chain" id="PRO_0000127541" description="Large ribosomal subunit protein eL15">
    <location>
        <begin position="2"/>
        <end position="204"/>
    </location>
</feature>
<sequence length="204" mass="24062">MGAYKYMQKLWRKKQSNVMRFLLRVRCWQYRQLSSLHRAPRPTRPDKARRLGYKAKQGYVIYRIRVRRGGRKRPVPKGATYGKPVHHGVNQIKFARSLQSVAEERAGRHCGGLRVLNSYWVGEDSTYKFFEVILIDTFHKAIRRNPDTQWITKAVHKHREMRGLTSAGKKSRGLGKGHKFHLTIGGSRRAAWKRRNTLQLHRYR</sequence>
<proteinExistence type="evidence at transcript level"/>
<reference key="1">
    <citation type="submission" date="2003-03" db="EMBL/GenBank/DDBJ databases">
        <title>Evaluating the potential of ribosomal protein L15 as a novel marker for phylogenetic analysis: a comparative analysis of 15 teleost RPL15 cDNAs.</title>
        <authorList>
            <person name="Song P."/>
            <person name="Zhang J."/>
            <person name="Xiang Z."/>
        </authorList>
    </citation>
    <scope>NUCLEOTIDE SEQUENCE [MRNA]</scope>
    <source>
        <tissue>Liver</tissue>
    </source>
</reference>
<name>RL15_MEGAM</name>
<gene>
    <name type="primary">rpl15</name>
</gene>
<keyword id="KW-0963">Cytoplasm</keyword>
<keyword id="KW-0687">Ribonucleoprotein</keyword>
<keyword id="KW-0689">Ribosomal protein</keyword>
<accession>Q7T3N4</accession>
<protein>
    <recommendedName>
        <fullName evidence="3">Large ribosomal subunit protein eL15</fullName>
    </recommendedName>
    <alternativeName>
        <fullName>60S ribosomal protein L15</fullName>
    </alternativeName>
</protein>